<evidence type="ECO:0000250" key="1"/>
<accession>P81104</accession>
<organism>
    <name type="scientific">Pinus pinaster</name>
    <name type="common">Maritime pine</name>
    <dbReference type="NCBI Taxonomy" id="71647"/>
    <lineage>
        <taxon>Eukaryota</taxon>
        <taxon>Viridiplantae</taxon>
        <taxon>Streptophyta</taxon>
        <taxon>Embryophyta</taxon>
        <taxon>Tracheophyta</taxon>
        <taxon>Spermatophyta</taxon>
        <taxon>Pinopsida</taxon>
        <taxon>Pinidae</taxon>
        <taxon>Conifers I</taxon>
        <taxon>Pinales</taxon>
        <taxon>Pinaceae</taxon>
        <taxon>Pinus</taxon>
        <taxon>Pinus subgen. Pinus</taxon>
    </lineage>
</organism>
<name>FKB70_PINPS</name>
<proteinExistence type="evidence at protein level"/>
<sequence length="15" mass="1676">XGESWETPETGDEVE</sequence>
<dbReference type="EC" id="5.2.1.8"/>
<dbReference type="GO" id="GO:0005516">
    <property type="term" value="F:calmodulin binding"/>
    <property type="evidence" value="ECO:0007669"/>
    <property type="project" value="UniProtKB-KW"/>
</dbReference>
<dbReference type="GO" id="GO:0003755">
    <property type="term" value="F:peptidyl-prolyl cis-trans isomerase activity"/>
    <property type="evidence" value="ECO:0007669"/>
    <property type="project" value="UniProtKB-KW"/>
</dbReference>
<reference key="1">
    <citation type="journal article" date="1997" name="Silvae Genet.">
        <title>Genetic analysis of needle proteins in maritime pine. 1. Mapping dominant and codominant protein markers assayed on diploid tissue, in a haploid-based genetic map.</title>
        <authorList>
            <person name="Plomion C."/>
            <person name="Costa P."/>
            <person name="Bahrman N."/>
            <person name="Frigerio J.-M."/>
        </authorList>
    </citation>
    <scope>PROTEIN SEQUENCE</scope>
    <source>
        <tissue>Needle</tissue>
    </source>
</reference>
<reference key="2">
    <citation type="journal article" date="1999" name="Electrophoresis">
        <title>Separation and characterization of needle and xylem maritime pine proteins.</title>
        <authorList>
            <person name="Costa P."/>
            <person name="Pionneau C."/>
            <person name="Bauw G."/>
            <person name="Dubos C."/>
            <person name="Bahrman N."/>
            <person name="Kremer A."/>
            <person name="Frigerio J.-M."/>
            <person name="Plomion C."/>
        </authorList>
    </citation>
    <scope>PROTEIN SEQUENCE</scope>
    <source>
        <tissue>Needle</tissue>
    </source>
</reference>
<comment type="function">
    <text>PPIases accelerate the folding of proteins during protein synthesis.</text>
</comment>
<comment type="catalytic activity">
    <reaction>
        <text>[protein]-peptidylproline (omega=180) = [protein]-peptidylproline (omega=0)</text>
        <dbReference type="Rhea" id="RHEA:16237"/>
        <dbReference type="Rhea" id="RHEA-COMP:10747"/>
        <dbReference type="Rhea" id="RHEA-COMP:10748"/>
        <dbReference type="ChEBI" id="CHEBI:83833"/>
        <dbReference type="ChEBI" id="CHEBI:83834"/>
        <dbReference type="EC" id="5.2.1.8"/>
    </reaction>
</comment>
<comment type="subunit">
    <text evidence="1">This PPIase probably binds calmodulin.</text>
</comment>
<comment type="miscellaneous">
    <text>On the 2D-gel the determined pI of this protein is: 5.3, its MW is: 72 kDa.</text>
</comment>
<protein>
    <recommendedName>
        <fullName>70 kDa peptidyl-prolyl isomerase</fullName>
        <ecNumber>5.2.1.8</ecNumber>
    </recommendedName>
    <alternativeName>
        <fullName>Cyclophilin</fullName>
    </alternativeName>
    <alternativeName>
        <fullName>PPIase</fullName>
    </alternativeName>
    <alternativeName>
        <fullName>Peptidyl-prolyl cis-trans isomerase</fullName>
    </alternativeName>
    <alternativeName>
        <fullName>S1205-06</fullName>
    </alternativeName>
</protein>
<keyword id="KW-0112">Calmodulin-binding</keyword>
<keyword id="KW-0903">Direct protein sequencing</keyword>
<keyword id="KW-0413">Isomerase</keyword>
<keyword id="KW-0677">Repeat</keyword>
<keyword id="KW-0697">Rotamase</keyword>
<feature type="chain" id="PRO_0000075334" description="70 kDa peptidyl-prolyl isomerase">
    <location>
        <begin position="1" status="less than"/>
        <end position="15" status="greater than"/>
    </location>
</feature>
<feature type="non-terminal residue">
    <location>
        <position position="1"/>
    </location>
</feature>
<feature type="non-terminal residue">
    <location>
        <position position="15"/>
    </location>
</feature>